<name>TGT_STAA1</name>
<accession>A7X354</accession>
<evidence type="ECO:0000255" key="1">
    <source>
        <dbReference type="HAMAP-Rule" id="MF_00168"/>
    </source>
</evidence>
<proteinExistence type="inferred from homology"/>
<dbReference type="EC" id="2.4.2.29" evidence="1"/>
<dbReference type="EMBL" id="AP009324">
    <property type="protein sequence ID" value="BAF78509.1"/>
    <property type="molecule type" value="Genomic_DNA"/>
</dbReference>
<dbReference type="RefSeq" id="WP_001112045.1">
    <property type="nucleotide sequence ID" value="NZ_CTYB01000003.1"/>
</dbReference>
<dbReference type="SMR" id="A7X354"/>
<dbReference type="KEGG" id="saw:SAHV_1626"/>
<dbReference type="HOGENOM" id="CLU_022060_0_1_9"/>
<dbReference type="UniPathway" id="UPA00392"/>
<dbReference type="GO" id="GO:0005829">
    <property type="term" value="C:cytosol"/>
    <property type="evidence" value="ECO:0007669"/>
    <property type="project" value="TreeGrafter"/>
</dbReference>
<dbReference type="GO" id="GO:0046872">
    <property type="term" value="F:metal ion binding"/>
    <property type="evidence" value="ECO:0007669"/>
    <property type="project" value="UniProtKB-KW"/>
</dbReference>
<dbReference type="GO" id="GO:0008479">
    <property type="term" value="F:tRNA-guanosine(34) queuine transglycosylase activity"/>
    <property type="evidence" value="ECO:0007669"/>
    <property type="project" value="UniProtKB-UniRule"/>
</dbReference>
<dbReference type="GO" id="GO:0008616">
    <property type="term" value="P:queuosine biosynthetic process"/>
    <property type="evidence" value="ECO:0007669"/>
    <property type="project" value="UniProtKB-UniRule"/>
</dbReference>
<dbReference type="GO" id="GO:0002099">
    <property type="term" value="P:tRNA wobble guanine modification"/>
    <property type="evidence" value="ECO:0007669"/>
    <property type="project" value="TreeGrafter"/>
</dbReference>
<dbReference type="GO" id="GO:0101030">
    <property type="term" value="P:tRNA-guanine transglycosylation"/>
    <property type="evidence" value="ECO:0007669"/>
    <property type="project" value="InterPro"/>
</dbReference>
<dbReference type="FunFam" id="3.20.20.105:FF:000001">
    <property type="entry name" value="Queuine tRNA-ribosyltransferase"/>
    <property type="match status" value="1"/>
</dbReference>
<dbReference type="Gene3D" id="3.20.20.105">
    <property type="entry name" value="Queuine tRNA-ribosyltransferase-like"/>
    <property type="match status" value="1"/>
</dbReference>
<dbReference type="HAMAP" id="MF_00168">
    <property type="entry name" value="Q_tRNA_Tgt"/>
    <property type="match status" value="1"/>
</dbReference>
<dbReference type="InterPro" id="IPR050076">
    <property type="entry name" value="ArchSynthase1/Queuine_TRR"/>
</dbReference>
<dbReference type="InterPro" id="IPR004803">
    <property type="entry name" value="TGT"/>
</dbReference>
<dbReference type="InterPro" id="IPR036511">
    <property type="entry name" value="TGT-like_sf"/>
</dbReference>
<dbReference type="InterPro" id="IPR002616">
    <property type="entry name" value="tRNA_ribo_trans-like"/>
</dbReference>
<dbReference type="NCBIfam" id="TIGR00430">
    <property type="entry name" value="Q_tRNA_tgt"/>
    <property type="match status" value="1"/>
</dbReference>
<dbReference type="NCBIfam" id="TIGR00449">
    <property type="entry name" value="tgt_general"/>
    <property type="match status" value="1"/>
</dbReference>
<dbReference type="PANTHER" id="PTHR46499">
    <property type="entry name" value="QUEUINE TRNA-RIBOSYLTRANSFERASE"/>
    <property type="match status" value="1"/>
</dbReference>
<dbReference type="PANTHER" id="PTHR46499:SF1">
    <property type="entry name" value="QUEUINE TRNA-RIBOSYLTRANSFERASE"/>
    <property type="match status" value="1"/>
</dbReference>
<dbReference type="Pfam" id="PF01702">
    <property type="entry name" value="TGT"/>
    <property type="match status" value="1"/>
</dbReference>
<dbReference type="SUPFAM" id="SSF51713">
    <property type="entry name" value="tRNA-guanine transglycosylase"/>
    <property type="match status" value="1"/>
</dbReference>
<protein>
    <recommendedName>
        <fullName evidence="1">Queuine tRNA-ribosyltransferase</fullName>
        <ecNumber evidence="1">2.4.2.29</ecNumber>
    </recommendedName>
    <alternativeName>
        <fullName evidence="1">Guanine insertion enzyme</fullName>
    </alternativeName>
    <alternativeName>
        <fullName evidence="1">tRNA-guanine transglycosylase</fullName>
    </alternativeName>
</protein>
<reference key="1">
    <citation type="journal article" date="2008" name="Antimicrob. Agents Chemother.">
        <title>Mutated response regulator graR is responsible for phenotypic conversion of Staphylococcus aureus from heterogeneous vancomycin-intermediate resistance to vancomycin-intermediate resistance.</title>
        <authorList>
            <person name="Neoh H.-M."/>
            <person name="Cui L."/>
            <person name="Yuzawa H."/>
            <person name="Takeuchi F."/>
            <person name="Matsuo M."/>
            <person name="Hiramatsu K."/>
        </authorList>
    </citation>
    <scope>NUCLEOTIDE SEQUENCE [LARGE SCALE GENOMIC DNA]</scope>
    <source>
        <strain>Mu3 / ATCC 700698</strain>
    </source>
</reference>
<organism>
    <name type="scientific">Staphylococcus aureus (strain Mu3 / ATCC 700698)</name>
    <dbReference type="NCBI Taxonomy" id="418127"/>
    <lineage>
        <taxon>Bacteria</taxon>
        <taxon>Bacillati</taxon>
        <taxon>Bacillota</taxon>
        <taxon>Bacilli</taxon>
        <taxon>Bacillales</taxon>
        <taxon>Staphylococcaceae</taxon>
        <taxon>Staphylococcus</taxon>
    </lineage>
</organism>
<keyword id="KW-0328">Glycosyltransferase</keyword>
<keyword id="KW-0479">Metal-binding</keyword>
<keyword id="KW-0671">Queuosine biosynthesis</keyword>
<keyword id="KW-0808">Transferase</keyword>
<keyword id="KW-0819">tRNA processing</keyword>
<keyword id="KW-0862">Zinc</keyword>
<comment type="function">
    <text evidence="1">Catalyzes the base-exchange of a guanine (G) residue with the queuine precursor 7-aminomethyl-7-deazaguanine (PreQ1) at position 34 (anticodon wobble position) in tRNAs with GU(N) anticodons (tRNA-Asp, -Asn, -His and -Tyr). Catalysis occurs through a double-displacement mechanism. The nucleophile active site attacks the C1' of nucleotide 34 to detach the guanine base from the RNA, forming a covalent enzyme-RNA intermediate. The proton acceptor active site deprotonates the incoming PreQ1, allowing a nucleophilic attack on the C1' of the ribose to form the product. After dissociation, two additional enzymatic reactions on the tRNA convert PreQ1 to queuine (Q), resulting in the hypermodified nucleoside queuosine (7-(((4,5-cis-dihydroxy-2-cyclopenten-1-yl)amino)methyl)-7-deazaguanosine).</text>
</comment>
<comment type="catalytic activity">
    <reaction evidence="1">
        <text>7-aminomethyl-7-carbaguanine + guanosine(34) in tRNA = 7-aminomethyl-7-carbaguanosine(34) in tRNA + guanine</text>
        <dbReference type="Rhea" id="RHEA:24104"/>
        <dbReference type="Rhea" id="RHEA-COMP:10341"/>
        <dbReference type="Rhea" id="RHEA-COMP:10342"/>
        <dbReference type="ChEBI" id="CHEBI:16235"/>
        <dbReference type="ChEBI" id="CHEBI:58703"/>
        <dbReference type="ChEBI" id="CHEBI:74269"/>
        <dbReference type="ChEBI" id="CHEBI:82833"/>
        <dbReference type="EC" id="2.4.2.29"/>
    </reaction>
</comment>
<comment type="cofactor">
    <cofactor evidence="1">
        <name>Zn(2+)</name>
        <dbReference type="ChEBI" id="CHEBI:29105"/>
    </cofactor>
    <text evidence="1">Binds 1 zinc ion per subunit.</text>
</comment>
<comment type="pathway">
    <text evidence="1">tRNA modification; tRNA-queuosine biosynthesis.</text>
</comment>
<comment type="subunit">
    <text evidence="1">Homodimer. Within each dimer, one monomer is responsible for RNA recognition and catalysis, while the other monomer binds to the replacement base PreQ1.</text>
</comment>
<comment type="similarity">
    <text evidence="1">Belongs to the queuine tRNA-ribosyltransferase family.</text>
</comment>
<gene>
    <name evidence="1" type="primary">tgt</name>
    <name type="ordered locus">SAHV_1626</name>
</gene>
<feature type="chain" id="PRO_1000016861" description="Queuine tRNA-ribosyltransferase">
    <location>
        <begin position="1"/>
        <end position="379"/>
    </location>
</feature>
<feature type="region of interest" description="RNA binding" evidence="1">
    <location>
        <begin position="249"/>
        <end position="255"/>
    </location>
</feature>
<feature type="region of interest" description="RNA binding; important for wobble base 34 recognition" evidence="1">
    <location>
        <begin position="273"/>
        <end position="277"/>
    </location>
</feature>
<feature type="active site" description="Proton acceptor" evidence="1">
    <location>
        <position position="94"/>
    </location>
</feature>
<feature type="active site" description="Nucleophile" evidence="1">
    <location>
        <position position="268"/>
    </location>
</feature>
<feature type="binding site" evidence="1">
    <location>
        <begin position="94"/>
        <end position="98"/>
    </location>
    <ligand>
        <name>substrate</name>
    </ligand>
</feature>
<feature type="binding site" evidence="1">
    <location>
        <position position="148"/>
    </location>
    <ligand>
        <name>substrate</name>
    </ligand>
</feature>
<feature type="binding site" evidence="1">
    <location>
        <position position="191"/>
    </location>
    <ligand>
        <name>substrate</name>
    </ligand>
</feature>
<feature type="binding site" evidence="1">
    <location>
        <position position="218"/>
    </location>
    <ligand>
        <name>substrate</name>
    </ligand>
</feature>
<feature type="binding site" evidence="1">
    <location>
        <position position="306"/>
    </location>
    <ligand>
        <name>Zn(2+)</name>
        <dbReference type="ChEBI" id="CHEBI:29105"/>
    </ligand>
</feature>
<feature type="binding site" evidence="1">
    <location>
        <position position="308"/>
    </location>
    <ligand>
        <name>Zn(2+)</name>
        <dbReference type="ChEBI" id="CHEBI:29105"/>
    </ligand>
</feature>
<feature type="binding site" evidence="1">
    <location>
        <position position="311"/>
    </location>
    <ligand>
        <name>Zn(2+)</name>
        <dbReference type="ChEBI" id="CHEBI:29105"/>
    </ligand>
</feature>
<feature type="binding site" evidence="1">
    <location>
        <position position="337"/>
    </location>
    <ligand>
        <name>Zn(2+)</name>
        <dbReference type="ChEBI" id="CHEBI:29105"/>
    </ligand>
</feature>
<sequence>MPAVTYEHIKTCKQSGARLGIVHTPHGSFETPMFMPVGTKATVKTMSPEELRQIEAKIILGNTYHLWLQPGNDIIKHAGGLHKFMNWDGPILTDSGGFQVFSLSNLRKITEEGVEFRHHTNGSKLFLSPEKSMQIQNDLGSDIMMAFDECPPMPAEYDYVKKSIERTTRWAKRCLDAHQRPEDQALFGIIQGGEYEDLREQSAKDLVELDFPGYAIGGLSVGEPKPVMYKMVEHTEQFMPKDKPRYLMGVGSPDALIECSIRGMDMFDCVLPTRIARNGTCMTSQGRLVIKNAKFADDLRPLDENCDCYTCQNYSRAYIRHLIKAEETFGIRLTTIHNLHFLLKLMEDIRQAIREDRLLDFKEEFFEQYGLNVENPKNF</sequence>